<keyword id="KW-0249">Electron transport</keyword>
<keyword id="KW-0472">Membrane</keyword>
<keyword id="KW-0602">Photosynthesis</keyword>
<keyword id="KW-1185">Reference proteome</keyword>
<keyword id="KW-0793">Thylakoid</keyword>
<keyword id="KW-0812">Transmembrane</keyword>
<keyword id="KW-1133">Transmembrane helix</keyword>
<keyword id="KW-0813">Transport</keyword>
<comment type="function">
    <text evidence="1">Component of the cytochrome b6-f complex, which mediates electron transfer between photosystem II (PSII) and photosystem I (PSI), cyclic electron flow around PSI, and state transitions. PetG is required for either the stability or assembly of the cytochrome b6-f complex.</text>
</comment>
<comment type="subunit">
    <text evidence="1">The 4 large subunits of the cytochrome b6-f complex are cytochrome b6, subunit IV (17 kDa polypeptide, PetD), cytochrome f and the Rieske protein, while the 4 small subunits are PetG, PetL, PetM and PetN. The complex functions as a dimer.</text>
</comment>
<comment type="subcellular location">
    <subcellularLocation>
        <location evidence="1">Cellular thylakoid membrane</location>
        <topology evidence="1">Single-pass membrane protein</topology>
    </subcellularLocation>
</comment>
<comment type="similarity">
    <text evidence="1">Belongs to the PetG family.</text>
</comment>
<name>PETG_SYNPW</name>
<sequence>MIEPLLCGIVLGLIPVTLLGLFVAAWNQYRRGSALGG</sequence>
<organism>
    <name type="scientific">Synechococcus sp. (strain WH7803)</name>
    <dbReference type="NCBI Taxonomy" id="32051"/>
    <lineage>
        <taxon>Bacteria</taxon>
        <taxon>Bacillati</taxon>
        <taxon>Cyanobacteriota</taxon>
        <taxon>Cyanophyceae</taxon>
        <taxon>Synechococcales</taxon>
        <taxon>Synechococcaceae</taxon>
        <taxon>Synechococcus</taxon>
    </lineage>
</organism>
<evidence type="ECO:0000255" key="1">
    <source>
        <dbReference type="HAMAP-Rule" id="MF_00432"/>
    </source>
</evidence>
<gene>
    <name evidence="1" type="primary">petG</name>
    <name type="ordered locus">SynWH7803_1595</name>
</gene>
<proteinExistence type="inferred from homology"/>
<protein>
    <recommendedName>
        <fullName evidence="1">Cytochrome b6-f complex subunit 5</fullName>
    </recommendedName>
    <alternativeName>
        <fullName evidence="1">Cytochrome b6-f complex subunit PetG</fullName>
    </alternativeName>
    <alternativeName>
        <fullName evidence="1">Cytochrome b6-f complex subunit V</fullName>
    </alternativeName>
</protein>
<feature type="chain" id="PRO_1000050398" description="Cytochrome b6-f complex subunit 5">
    <location>
        <begin position="1"/>
        <end position="37"/>
    </location>
</feature>
<feature type="transmembrane region" description="Helical" evidence="1">
    <location>
        <begin position="5"/>
        <end position="25"/>
    </location>
</feature>
<accession>A5GM56</accession>
<dbReference type="EMBL" id="CT971583">
    <property type="protein sequence ID" value="CAK24021.1"/>
    <property type="molecule type" value="Genomic_DNA"/>
</dbReference>
<dbReference type="SMR" id="A5GM56"/>
<dbReference type="STRING" id="32051.SynWH7803_1595"/>
<dbReference type="KEGG" id="syx:SynWH7803_1595"/>
<dbReference type="eggNOG" id="ENOG5033BE9">
    <property type="taxonomic scope" value="Bacteria"/>
</dbReference>
<dbReference type="HOGENOM" id="CLU_216962_0_0_3"/>
<dbReference type="OrthoDB" id="428448at2"/>
<dbReference type="Proteomes" id="UP000001566">
    <property type="component" value="Chromosome"/>
</dbReference>
<dbReference type="GO" id="GO:0009512">
    <property type="term" value="C:cytochrome b6f complex"/>
    <property type="evidence" value="ECO:0007669"/>
    <property type="project" value="InterPro"/>
</dbReference>
<dbReference type="GO" id="GO:0031676">
    <property type="term" value="C:plasma membrane-derived thylakoid membrane"/>
    <property type="evidence" value="ECO:0007669"/>
    <property type="project" value="UniProtKB-SubCell"/>
</dbReference>
<dbReference type="GO" id="GO:0045158">
    <property type="term" value="F:electron transporter, transferring electrons within cytochrome b6/f complex of photosystem II activity"/>
    <property type="evidence" value="ECO:0007669"/>
    <property type="project" value="UniProtKB-UniRule"/>
</dbReference>
<dbReference type="GO" id="GO:0017004">
    <property type="term" value="P:cytochrome complex assembly"/>
    <property type="evidence" value="ECO:0007669"/>
    <property type="project" value="UniProtKB-UniRule"/>
</dbReference>
<dbReference type="GO" id="GO:0015979">
    <property type="term" value="P:photosynthesis"/>
    <property type="evidence" value="ECO:0007669"/>
    <property type="project" value="UniProtKB-KW"/>
</dbReference>
<dbReference type="HAMAP" id="MF_00432">
    <property type="entry name" value="Cytb6_f_PetG"/>
    <property type="match status" value="1"/>
</dbReference>
<dbReference type="InterPro" id="IPR003683">
    <property type="entry name" value="Cyt_6/f_cplx_su5"/>
</dbReference>
<dbReference type="InterPro" id="IPR036099">
    <property type="entry name" value="Cyt_6/f_cplx_su5_sf"/>
</dbReference>
<dbReference type="NCBIfam" id="NF001907">
    <property type="entry name" value="PRK00665.1"/>
    <property type="match status" value="1"/>
</dbReference>
<dbReference type="Pfam" id="PF02529">
    <property type="entry name" value="PetG"/>
    <property type="match status" value="1"/>
</dbReference>
<dbReference type="PIRSF" id="PIRSF000034">
    <property type="entry name" value="Cyt_b6-f_V"/>
    <property type="match status" value="1"/>
</dbReference>
<dbReference type="SUPFAM" id="SSF103446">
    <property type="entry name" value="PetG subunit of the cytochrome b6f complex"/>
    <property type="match status" value="1"/>
</dbReference>
<reference key="1">
    <citation type="submission" date="2006-05" db="EMBL/GenBank/DDBJ databases">
        <authorList>
            <consortium name="Genoscope"/>
        </authorList>
    </citation>
    <scope>NUCLEOTIDE SEQUENCE [LARGE SCALE GENOMIC DNA]</scope>
    <source>
        <strain>WH7803</strain>
    </source>
</reference>